<evidence type="ECO:0000255" key="1">
    <source>
        <dbReference type="HAMAP-Rule" id="MF_02017"/>
    </source>
</evidence>
<evidence type="ECO:0000256" key="2">
    <source>
        <dbReference type="SAM" id="MobiDB-lite"/>
    </source>
</evidence>
<feature type="chain" id="PRO_0000361854" description="Cytoskeleton protein RodZ">
    <location>
        <begin position="1"/>
        <end position="336"/>
    </location>
</feature>
<feature type="topological domain" description="Cytoplasmic" evidence="1">
    <location>
        <begin position="1"/>
        <end position="111"/>
    </location>
</feature>
<feature type="transmembrane region" description="Helical; Signal-anchor for type II membrane protein" evidence="1">
    <location>
        <begin position="112"/>
        <end position="132"/>
    </location>
</feature>
<feature type="topological domain" description="Periplasmic" evidence="1">
    <location>
        <begin position="133"/>
        <end position="336"/>
    </location>
</feature>
<feature type="domain" description="HTH cro/C1-type" evidence="1">
    <location>
        <begin position="19"/>
        <end position="71"/>
    </location>
</feature>
<feature type="DNA-binding region" description="H-T-H motif" evidence="1">
    <location>
        <begin position="30"/>
        <end position="49"/>
    </location>
</feature>
<feature type="region of interest" description="Disordered" evidence="2">
    <location>
        <begin position="155"/>
        <end position="243"/>
    </location>
</feature>
<feature type="compositionally biased region" description="Polar residues" evidence="2">
    <location>
        <begin position="161"/>
        <end position="175"/>
    </location>
</feature>
<feature type="compositionally biased region" description="Low complexity" evidence="2">
    <location>
        <begin position="176"/>
        <end position="214"/>
    </location>
</feature>
<feature type="compositionally biased region" description="Low complexity" evidence="2">
    <location>
        <begin position="221"/>
        <end position="243"/>
    </location>
</feature>
<dbReference type="EMBL" id="CP001113">
    <property type="protein sequence ID" value="ACF64134.1"/>
    <property type="molecule type" value="Genomic_DNA"/>
</dbReference>
<dbReference type="RefSeq" id="WP_001090895.1">
    <property type="nucleotide sequence ID" value="NZ_CCMR01000001.1"/>
</dbReference>
<dbReference type="SMR" id="B4T0Q0"/>
<dbReference type="KEGG" id="see:SNSL254_A2719"/>
<dbReference type="HOGENOM" id="CLU_047530_3_1_6"/>
<dbReference type="Proteomes" id="UP000008824">
    <property type="component" value="Chromosome"/>
</dbReference>
<dbReference type="GO" id="GO:0005886">
    <property type="term" value="C:plasma membrane"/>
    <property type="evidence" value="ECO:0007669"/>
    <property type="project" value="UniProtKB-SubCell"/>
</dbReference>
<dbReference type="GO" id="GO:0003677">
    <property type="term" value="F:DNA binding"/>
    <property type="evidence" value="ECO:0007669"/>
    <property type="project" value="UniProtKB-KW"/>
</dbReference>
<dbReference type="GO" id="GO:0008360">
    <property type="term" value="P:regulation of cell shape"/>
    <property type="evidence" value="ECO:0007669"/>
    <property type="project" value="UniProtKB-UniRule"/>
</dbReference>
<dbReference type="CDD" id="cd00093">
    <property type="entry name" value="HTH_XRE"/>
    <property type="match status" value="1"/>
</dbReference>
<dbReference type="FunFam" id="1.10.260.40:FF:000014">
    <property type="entry name" value="Cytoskeleton protein RodZ"/>
    <property type="match status" value="1"/>
</dbReference>
<dbReference type="Gene3D" id="1.10.260.40">
    <property type="entry name" value="lambda repressor-like DNA-binding domains"/>
    <property type="match status" value="1"/>
</dbReference>
<dbReference type="HAMAP" id="MF_02017">
    <property type="entry name" value="RodZ"/>
    <property type="match status" value="1"/>
</dbReference>
<dbReference type="InterPro" id="IPR050400">
    <property type="entry name" value="Bact_Cytoskel_RodZ"/>
</dbReference>
<dbReference type="InterPro" id="IPR001387">
    <property type="entry name" value="Cro/C1-type_HTH"/>
</dbReference>
<dbReference type="InterPro" id="IPR010982">
    <property type="entry name" value="Lambda_DNA-bd_dom_sf"/>
</dbReference>
<dbReference type="InterPro" id="IPR023690">
    <property type="entry name" value="RodZ"/>
</dbReference>
<dbReference type="InterPro" id="IPR025194">
    <property type="entry name" value="RodZ-like_C"/>
</dbReference>
<dbReference type="NCBIfam" id="NF008109">
    <property type="entry name" value="PRK10856.1"/>
    <property type="match status" value="1"/>
</dbReference>
<dbReference type="PANTHER" id="PTHR34475">
    <property type="match status" value="1"/>
</dbReference>
<dbReference type="PANTHER" id="PTHR34475:SF1">
    <property type="entry name" value="CYTOSKELETON PROTEIN RODZ"/>
    <property type="match status" value="1"/>
</dbReference>
<dbReference type="Pfam" id="PF13413">
    <property type="entry name" value="HTH_25"/>
    <property type="match status" value="1"/>
</dbReference>
<dbReference type="Pfam" id="PF13464">
    <property type="entry name" value="RodZ_C"/>
    <property type="match status" value="1"/>
</dbReference>
<dbReference type="SMART" id="SM00530">
    <property type="entry name" value="HTH_XRE"/>
    <property type="match status" value="1"/>
</dbReference>
<dbReference type="SUPFAM" id="SSF47413">
    <property type="entry name" value="lambda repressor-like DNA-binding domains"/>
    <property type="match status" value="1"/>
</dbReference>
<dbReference type="PROSITE" id="PS50943">
    <property type="entry name" value="HTH_CROC1"/>
    <property type="match status" value="1"/>
</dbReference>
<keyword id="KW-0997">Cell inner membrane</keyword>
<keyword id="KW-1003">Cell membrane</keyword>
<keyword id="KW-0133">Cell shape</keyword>
<keyword id="KW-0238">DNA-binding</keyword>
<keyword id="KW-0472">Membrane</keyword>
<keyword id="KW-0735">Signal-anchor</keyword>
<keyword id="KW-0812">Transmembrane</keyword>
<keyword id="KW-1133">Transmembrane helix</keyword>
<reference key="1">
    <citation type="journal article" date="2011" name="J. Bacteriol.">
        <title>Comparative genomics of 28 Salmonella enterica isolates: evidence for CRISPR-mediated adaptive sublineage evolution.</title>
        <authorList>
            <person name="Fricke W.F."/>
            <person name="Mammel M.K."/>
            <person name="McDermott P.F."/>
            <person name="Tartera C."/>
            <person name="White D.G."/>
            <person name="Leclerc J.E."/>
            <person name="Ravel J."/>
            <person name="Cebula T.A."/>
        </authorList>
    </citation>
    <scope>NUCLEOTIDE SEQUENCE [LARGE SCALE GENOMIC DNA]</scope>
    <source>
        <strain>SL254</strain>
    </source>
</reference>
<gene>
    <name evidence="1" type="primary">rodZ</name>
    <name type="ordered locus">SNSL254_A2719</name>
</gene>
<organism>
    <name type="scientific">Salmonella newport (strain SL254)</name>
    <dbReference type="NCBI Taxonomy" id="423368"/>
    <lineage>
        <taxon>Bacteria</taxon>
        <taxon>Pseudomonadati</taxon>
        <taxon>Pseudomonadota</taxon>
        <taxon>Gammaproteobacteria</taxon>
        <taxon>Enterobacterales</taxon>
        <taxon>Enterobacteriaceae</taxon>
        <taxon>Salmonella</taxon>
    </lineage>
</organism>
<proteinExistence type="inferred from homology"/>
<protein>
    <recommendedName>
        <fullName evidence="1">Cytoskeleton protein RodZ</fullName>
    </recommendedName>
</protein>
<sequence length="336" mass="35916">MNTEATHDQNEAQTTGVRLRNAREQLGLSQQAVAERLCLKVSTVRDIEEDKAPSDLASTFLRGYIRSYARLVHVPEEELLPGLEKQAPLRAAKVAPMQSFSLGKRRKKRDGWLMSFTWLVLFVVVGLTGAWWWQNHKAQQEEITTMADQSTAELNADKDSGQSVPLDTGAVTSQDTTPAQTAPAPATPVDSTAATQTQTPAPTAAATQNTVVAPSQANVDTAATSAAPAATETPSALPTSQAGVAAPAADPNALVMNFTADCWLEVTDATGKKLFSGMQRKDGNLNLTGQAPYKLKIGAPAAVQIQYQGKPVDLSRFIRTNQVARLTLNAEPTPAQ</sequence>
<accession>B4T0Q0</accession>
<comment type="function">
    <text evidence="1">Cytoskeletal protein that is involved in cell-shape control through regulation of the length of the long axis.</text>
</comment>
<comment type="subcellular location">
    <subcellularLocation>
        <location evidence="1">Cell inner membrane</location>
        <topology evidence="1">Single-pass type II membrane protein</topology>
    </subcellularLocation>
    <text evidence="1">Forms helical filaments along the long axis of the cell.</text>
</comment>
<comment type="domain">
    <text evidence="1">The helix-turn-helix (HTH) motif in the cytoplasmic domain of the N-terminus is involved in the formation of spirals to maintain the rigid rod shape. As this protein is anchored in the cytoplasmic membrane, the HTH motif may contribute to protein-protein interactions to form the RodZ helix, which is localized beneath the cytoplasmic membrane. The C-terminal domain may be critical for determination of the rod shape by probably interacting with enzymes required for synthesis of the peptidoglycan layer, including PBPs in the periplasm.</text>
</comment>
<comment type="similarity">
    <text evidence="1">Belongs to the RodZ family.</text>
</comment>
<name>RODZ_SALNS</name>